<accession>B3EEE5</accession>
<name>MDH_CHLL2</name>
<sequence>MKITVIGAGNVGATASLRIAEKQLAKEVVLIDIVEGIPQGKALDMYESGPVALFDTCIYGSNDYKDSENSDIVLITAGLARKPGMTREDLLMKNTAIIKEVTEQVMRYSKNPIIIMVSNPLDVMTYVAHTISGLAKERVIGMAGVLDTARFRSFIAEELNVSMQDINAFVLGGHGDSMVPIVKYTSIAGIPITELLPKEKIDAIVERTRNGGIEIVNHLKTGSAYYAPAASAVEMIEAIVKDRKRILPCTTMLNGQFGIDGVFCGVPVKLGKNGIEQILEINLSEYELEALQKSAALVEENCNSLQAVLS</sequence>
<organism>
    <name type="scientific">Chlorobium limicola (strain DSM 245 / NBRC 103803 / 6330)</name>
    <dbReference type="NCBI Taxonomy" id="290315"/>
    <lineage>
        <taxon>Bacteria</taxon>
        <taxon>Pseudomonadati</taxon>
        <taxon>Chlorobiota</taxon>
        <taxon>Chlorobiia</taxon>
        <taxon>Chlorobiales</taxon>
        <taxon>Chlorobiaceae</taxon>
        <taxon>Chlorobium/Pelodictyon group</taxon>
        <taxon>Chlorobium</taxon>
    </lineage>
</organism>
<reference key="1">
    <citation type="submission" date="2008-05" db="EMBL/GenBank/DDBJ databases">
        <title>Complete sequence of Chlorobium limicola DSM 245.</title>
        <authorList>
            <consortium name="US DOE Joint Genome Institute"/>
            <person name="Lucas S."/>
            <person name="Copeland A."/>
            <person name="Lapidus A."/>
            <person name="Glavina del Rio T."/>
            <person name="Dalin E."/>
            <person name="Tice H."/>
            <person name="Bruce D."/>
            <person name="Goodwin L."/>
            <person name="Pitluck S."/>
            <person name="Schmutz J."/>
            <person name="Larimer F."/>
            <person name="Land M."/>
            <person name="Hauser L."/>
            <person name="Kyrpides N."/>
            <person name="Ovchinnikova G."/>
            <person name="Zhao F."/>
            <person name="Li T."/>
            <person name="Liu Z."/>
            <person name="Overmann J."/>
            <person name="Bryant D.A."/>
            <person name="Richardson P."/>
        </authorList>
    </citation>
    <scope>NUCLEOTIDE SEQUENCE [LARGE SCALE GENOMIC DNA]</scope>
    <source>
        <strain>DSM 245 / NBRC 103803 / 6330</strain>
    </source>
</reference>
<evidence type="ECO:0000255" key="1">
    <source>
        <dbReference type="HAMAP-Rule" id="MF_00487"/>
    </source>
</evidence>
<feature type="chain" id="PRO_1000126128" description="Malate dehydrogenase">
    <location>
        <begin position="1"/>
        <end position="310"/>
    </location>
</feature>
<feature type="active site" description="Proton acceptor" evidence="1">
    <location>
        <position position="174"/>
    </location>
</feature>
<feature type="binding site" evidence="1">
    <location>
        <begin position="7"/>
        <end position="12"/>
    </location>
    <ligand>
        <name>NAD(+)</name>
        <dbReference type="ChEBI" id="CHEBI:57540"/>
    </ligand>
</feature>
<feature type="binding site" evidence="1">
    <location>
        <position position="32"/>
    </location>
    <ligand>
        <name>NAD(+)</name>
        <dbReference type="ChEBI" id="CHEBI:57540"/>
    </ligand>
</feature>
<feature type="binding site" evidence="1">
    <location>
        <position position="81"/>
    </location>
    <ligand>
        <name>substrate</name>
    </ligand>
</feature>
<feature type="binding site" evidence="1">
    <location>
        <position position="87"/>
    </location>
    <ligand>
        <name>substrate</name>
    </ligand>
</feature>
<feature type="binding site" evidence="1">
    <location>
        <position position="94"/>
    </location>
    <ligand>
        <name>NAD(+)</name>
        <dbReference type="ChEBI" id="CHEBI:57540"/>
    </ligand>
</feature>
<feature type="binding site" evidence="1">
    <location>
        <begin position="117"/>
        <end position="119"/>
    </location>
    <ligand>
        <name>NAD(+)</name>
        <dbReference type="ChEBI" id="CHEBI:57540"/>
    </ligand>
</feature>
<feature type="binding site" evidence="1">
    <location>
        <position position="119"/>
    </location>
    <ligand>
        <name>substrate</name>
    </ligand>
</feature>
<feature type="binding site" evidence="1">
    <location>
        <position position="150"/>
    </location>
    <ligand>
        <name>substrate</name>
    </ligand>
</feature>
<proteinExistence type="inferred from homology"/>
<dbReference type="EC" id="1.1.1.37" evidence="1"/>
<dbReference type="EMBL" id="CP001097">
    <property type="protein sequence ID" value="ACD90755.1"/>
    <property type="molecule type" value="Genomic_DNA"/>
</dbReference>
<dbReference type="RefSeq" id="WP_012466628.1">
    <property type="nucleotide sequence ID" value="NC_010803.1"/>
</dbReference>
<dbReference type="SMR" id="B3EEE5"/>
<dbReference type="STRING" id="290315.Clim_1713"/>
<dbReference type="KEGG" id="cli:Clim_1713"/>
<dbReference type="eggNOG" id="COG0039">
    <property type="taxonomic scope" value="Bacteria"/>
</dbReference>
<dbReference type="HOGENOM" id="CLU_045401_2_1_10"/>
<dbReference type="OrthoDB" id="9802969at2"/>
<dbReference type="Proteomes" id="UP000008841">
    <property type="component" value="Chromosome"/>
</dbReference>
<dbReference type="GO" id="GO:0004459">
    <property type="term" value="F:L-lactate dehydrogenase activity"/>
    <property type="evidence" value="ECO:0007669"/>
    <property type="project" value="TreeGrafter"/>
</dbReference>
<dbReference type="GO" id="GO:0030060">
    <property type="term" value="F:L-malate dehydrogenase (NAD+) activity"/>
    <property type="evidence" value="ECO:0007669"/>
    <property type="project" value="UniProtKB-UniRule"/>
</dbReference>
<dbReference type="GO" id="GO:0006089">
    <property type="term" value="P:lactate metabolic process"/>
    <property type="evidence" value="ECO:0007669"/>
    <property type="project" value="TreeGrafter"/>
</dbReference>
<dbReference type="GO" id="GO:0006099">
    <property type="term" value="P:tricarboxylic acid cycle"/>
    <property type="evidence" value="ECO:0007669"/>
    <property type="project" value="UniProtKB-UniRule"/>
</dbReference>
<dbReference type="CDD" id="cd01339">
    <property type="entry name" value="LDH-like_MDH"/>
    <property type="match status" value="1"/>
</dbReference>
<dbReference type="FunFam" id="3.40.50.720:FF:000018">
    <property type="entry name" value="Malate dehydrogenase"/>
    <property type="match status" value="1"/>
</dbReference>
<dbReference type="FunFam" id="3.90.110.10:FF:000004">
    <property type="entry name" value="Malate dehydrogenase"/>
    <property type="match status" value="1"/>
</dbReference>
<dbReference type="Gene3D" id="3.90.110.10">
    <property type="entry name" value="Lactate dehydrogenase/glycoside hydrolase, family 4, C-terminal"/>
    <property type="match status" value="1"/>
</dbReference>
<dbReference type="Gene3D" id="3.40.50.720">
    <property type="entry name" value="NAD(P)-binding Rossmann-like Domain"/>
    <property type="match status" value="1"/>
</dbReference>
<dbReference type="HAMAP" id="MF_00487">
    <property type="entry name" value="Malate_dehydrog_3"/>
    <property type="match status" value="1"/>
</dbReference>
<dbReference type="InterPro" id="IPR001557">
    <property type="entry name" value="L-lactate/malate_DH"/>
</dbReference>
<dbReference type="InterPro" id="IPR022383">
    <property type="entry name" value="Lactate/malate_DH_C"/>
</dbReference>
<dbReference type="InterPro" id="IPR001236">
    <property type="entry name" value="Lactate/malate_DH_N"/>
</dbReference>
<dbReference type="InterPro" id="IPR015955">
    <property type="entry name" value="Lactate_DH/Glyco_Ohase_4_C"/>
</dbReference>
<dbReference type="InterPro" id="IPR011275">
    <property type="entry name" value="Malate_DH_type3"/>
</dbReference>
<dbReference type="InterPro" id="IPR036291">
    <property type="entry name" value="NAD(P)-bd_dom_sf"/>
</dbReference>
<dbReference type="NCBIfam" id="TIGR01763">
    <property type="entry name" value="MalateDH_bact"/>
    <property type="match status" value="1"/>
</dbReference>
<dbReference type="NCBIfam" id="NF004863">
    <property type="entry name" value="PRK06223.1"/>
    <property type="match status" value="1"/>
</dbReference>
<dbReference type="PANTHER" id="PTHR43128">
    <property type="entry name" value="L-2-HYDROXYCARBOXYLATE DEHYDROGENASE (NAD(P)(+))"/>
    <property type="match status" value="1"/>
</dbReference>
<dbReference type="PANTHER" id="PTHR43128:SF16">
    <property type="entry name" value="L-LACTATE DEHYDROGENASE"/>
    <property type="match status" value="1"/>
</dbReference>
<dbReference type="Pfam" id="PF02866">
    <property type="entry name" value="Ldh_1_C"/>
    <property type="match status" value="1"/>
</dbReference>
<dbReference type="Pfam" id="PF00056">
    <property type="entry name" value="Ldh_1_N"/>
    <property type="match status" value="1"/>
</dbReference>
<dbReference type="PIRSF" id="PIRSF000102">
    <property type="entry name" value="Lac_mal_DH"/>
    <property type="match status" value="1"/>
</dbReference>
<dbReference type="PRINTS" id="PR00086">
    <property type="entry name" value="LLDHDRGNASE"/>
</dbReference>
<dbReference type="SUPFAM" id="SSF56327">
    <property type="entry name" value="LDH C-terminal domain-like"/>
    <property type="match status" value="1"/>
</dbReference>
<dbReference type="SUPFAM" id="SSF51735">
    <property type="entry name" value="NAD(P)-binding Rossmann-fold domains"/>
    <property type="match status" value="1"/>
</dbReference>
<keyword id="KW-0520">NAD</keyword>
<keyword id="KW-0560">Oxidoreductase</keyword>
<keyword id="KW-0816">Tricarboxylic acid cycle</keyword>
<comment type="function">
    <text evidence="1">Catalyzes the reversible oxidation of malate to oxaloacetate.</text>
</comment>
<comment type="catalytic activity">
    <reaction evidence="1">
        <text>(S)-malate + NAD(+) = oxaloacetate + NADH + H(+)</text>
        <dbReference type="Rhea" id="RHEA:21432"/>
        <dbReference type="ChEBI" id="CHEBI:15378"/>
        <dbReference type="ChEBI" id="CHEBI:15589"/>
        <dbReference type="ChEBI" id="CHEBI:16452"/>
        <dbReference type="ChEBI" id="CHEBI:57540"/>
        <dbReference type="ChEBI" id="CHEBI:57945"/>
        <dbReference type="EC" id="1.1.1.37"/>
    </reaction>
</comment>
<comment type="similarity">
    <text evidence="1">Belongs to the LDH/MDH superfamily. MDH type 3 family.</text>
</comment>
<protein>
    <recommendedName>
        <fullName evidence="1">Malate dehydrogenase</fullName>
        <ecNumber evidence="1">1.1.1.37</ecNumber>
    </recommendedName>
</protein>
<gene>
    <name evidence="1" type="primary">mdh</name>
    <name type="ordered locus">Clim_1713</name>
</gene>